<sequence length="412" mass="45172">MSYITKQDKVIAEAIEREFQRQNSNIELIASENFVSEAVMEAQGSVLTNKYAEGYPGRRYYGGCEFVDVTESIAIDRAKALFGAEHVNVQPHSGSQANMAVYLVALEMGDTVLGMNLSHGGHLTHGAPVNFSGKFYNFVEYGVDKDTERINYDEVRKLALEHKPKLIVAGASAYSRTIDFKKFKEIADEVNAKLMVDMAHIAGLVAAGLHPNPVEYADFVTTTTHKTLRGPRGGMILCKEEYKKDIDKTIFPGIQGGPLEHVIAAKAVAFGEALENNFKTYQQQVVKNAKVLAEALINEGFRIVSGGTDNHLVAVDVKGSIGLTGKEAEETLDSVGITCNKNTIPFDQEKPFVTSGIRLGTPAATTRGFDEKAFEEVAKIISLALKNSKDEEKLQQAKERVAKLTAEYPLYQ</sequence>
<gene>
    <name evidence="1" type="primary">glyA</name>
    <name type="ordered locus">SA1915</name>
</gene>
<comment type="function">
    <text evidence="1">Catalyzes the reversible interconversion of serine and glycine with tetrahydrofolate (THF) serving as the one-carbon carrier. This reaction serves as the major source of one-carbon groups required for the biosynthesis of purines, thymidylate, methionine, and other important biomolecules. Also exhibits THF-independent aldolase activity toward beta-hydroxyamino acids, producing glycine and aldehydes, via a retro-aldol mechanism.</text>
</comment>
<comment type="catalytic activity">
    <reaction evidence="1">
        <text>(6R)-5,10-methylene-5,6,7,8-tetrahydrofolate + glycine + H2O = (6S)-5,6,7,8-tetrahydrofolate + L-serine</text>
        <dbReference type="Rhea" id="RHEA:15481"/>
        <dbReference type="ChEBI" id="CHEBI:15377"/>
        <dbReference type="ChEBI" id="CHEBI:15636"/>
        <dbReference type="ChEBI" id="CHEBI:33384"/>
        <dbReference type="ChEBI" id="CHEBI:57305"/>
        <dbReference type="ChEBI" id="CHEBI:57453"/>
        <dbReference type="EC" id="2.1.2.1"/>
    </reaction>
</comment>
<comment type="cofactor">
    <cofactor evidence="1">
        <name>pyridoxal 5'-phosphate</name>
        <dbReference type="ChEBI" id="CHEBI:597326"/>
    </cofactor>
</comment>
<comment type="pathway">
    <text evidence="1">One-carbon metabolism; tetrahydrofolate interconversion.</text>
</comment>
<comment type="pathway">
    <text evidence="1">Amino-acid biosynthesis; glycine biosynthesis; glycine from L-serine: step 1/1.</text>
</comment>
<comment type="subunit">
    <text evidence="1">Homodimer.</text>
</comment>
<comment type="subcellular location">
    <subcellularLocation>
        <location evidence="1">Cytoplasm</location>
    </subcellularLocation>
</comment>
<comment type="similarity">
    <text evidence="1">Belongs to the SHMT family.</text>
</comment>
<reference key="1">
    <citation type="journal article" date="2001" name="Lancet">
        <title>Whole genome sequencing of meticillin-resistant Staphylococcus aureus.</title>
        <authorList>
            <person name="Kuroda M."/>
            <person name="Ohta T."/>
            <person name="Uchiyama I."/>
            <person name="Baba T."/>
            <person name="Yuzawa H."/>
            <person name="Kobayashi I."/>
            <person name="Cui L."/>
            <person name="Oguchi A."/>
            <person name="Aoki K."/>
            <person name="Nagai Y."/>
            <person name="Lian J.-Q."/>
            <person name="Ito T."/>
            <person name="Kanamori M."/>
            <person name="Matsumaru H."/>
            <person name="Maruyama A."/>
            <person name="Murakami H."/>
            <person name="Hosoyama A."/>
            <person name="Mizutani-Ui Y."/>
            <person name="Takahashi N.K."/>
            <person name="Sawano T."/>
            <person name="Inoue R."/>
            <person name="Kaito C."/>
            <person name="Sekimizu K."/>
            <person name="Hirakawa H."/>
            <person name="Kuhara S."/>
            <person name="Goto S."/>
            <person name="Yabuzaki J."/>
            <person name="Kanehisa M."/>
            <person name="Yamashita A."/>
            <person name="Oshima K."/>
            <person name="Furuya K."/>
            <person name="Yoshino C."/>
            <person name="Shiba T."/>
            <person name="Hattori M."/>
            <person name="Ogasawara N."/>
            <person name="Hayashi H."/>
            <person name="Hiramatsu K."/>
        </authorList>
    </citation>
    <scope>NUCLEOTIDE SEQUENCE [LARGE SCALE GENOMIC DNA]</scope>
    <source>
        <strain>N315</strain>
    </source>
</reference>
<reference key="2">
    <citation type="journal article" date="2005" name="J. Microbiol. Methods">
        <title>Correlation of proteomic and transcriptomic profiles of Staphylococcus aureus during the post-exponential phase of growth.</title>
        <authorList>
            <person name="Scherl A."/>
            <person name="Francois P."/>
            <person name="Bento M."/>
            <person name="Deshusses J.M."/>
            <person name="Charbonnier Y."/>
            <person name="Converset V."/>
            <person name="Huyghe A."/>
            <person name="Walter N."/>
            <person name="Hoogland C."/>
            <person name="Appel R.D."/>
            <person name="Sanchez J.-C."/>
            <person name="Zimmermann-Ivol C.G."/>
            <person name="Corthals G.L."/>
            <person name="Hochstrasser D.F."/>
            <person name="Schrenzel J."/>
        </authorList>
    </citation>
    <scope>IDENTIFICATION BY MASS SPECTROMETRY</scope>
    <source>
        <strain>N315</strain>
    </source>
</reference>
<reference key="3">
    <citation type="submission" date="2007-10" db="UniProtKB">
        <title>Shotgun proteomic analysis of total and membrane protein extracts of S. aureus strain N315.</title>
        <authorList>
            <person name="Vaezzadeh A.R."/>
            <person name="Deshusses J."/>
            <person name="Lescuyer P."/>
            <person name="Hochstrasser D.F."/>
        </authorList>
    </citation>
    <scope>IDENTIFICATION BY MASS SPECTROMETRY [LARGE SCALE ANALYSIS]</scope>
    <source>
        <strain>N315</strain>
    </source>
</reference>
<protein>
    <recommendedName>
        <fullName evidence="1">Serine hydroxymethyltransferase</fullName>
        <shortName evidence="1">SHMT</shortName>
        <shortName evidence="1">Serine methylase</shortName>
        <ecNumber evidence="1">2.1.2.1</ecNumber>
    </recommendedName>
</protein>
<organism>
    <name type="scientific">Staphylococcus aureus (strain N315)</name>
    <dbReference type="NCBI Taxonomy" id="158879"/>
    <lineage>
        <taxon>Bacteria</taxon>
        <taxon>Bacillati</taxon>
        <taxon>Bacillota</taxon>
        <taxon>Bacilli</taxon>
        <taxon>Bacillales</taxon>
        <taxon>Staphylococcaceae</taxon>
        <taxon>Staphylococcus</taxon>
    </lineage>
</organism>
<proteinExistence type="evidence at protein level"/>
<name>GLYA_STAAN</name>
<keyword id="KW-0028">Amino-acid biosynthesis</keyword>
<keyword id="KW-0963">Cytoplasm</keyword>
<keyword id="KW-0554">One-carbon metabolism</keyword>
<keyword id="KW-0663">Pyridoxal phosphate</keyword>
<keyword id="KW-0808">Transferase</keyword>
<evidence type="ECO:0000255" key="1">
    <source>
        <dbReference type="HAMAP-Rule" id="MF_00051"/>
    </source>
</evidence>
<accession>P99091</accession>
<accession>Q99SE5</accession>
<dbReference type="EC" id="2.1.2.1" evidence="1"/>
<dbReference type="EMBL" id="BA000018">
    <property type="protein sequence ID" value="BAB43199.1"/>
    <property type="molecule type" value="Genomic_DNA"/>
</dbReference>
<dbReference type="PIR" id="F90004">
    <property type="entry name" value="F90004"/>
</dbReference>
<dbReference type="RefSeq" id="WP_000120494.1">
    <property type="nucleotide sequence ID" value="NC_002745.2"/>
</dbReference>
<dbReference type="SMR" id="P99091"/>
<dbReference type="EnsemblBacteria" id="BAB43199">
    <property type="protein sequence ID" value="BAB43199"/>
    <property type="gene ID" value="BAB43199"/>
</dbReference>
<dbReference type="KEGG" id="sau:SA1915"/>
<dbReference type="HOGENOM" id="CLU_022477_2_1_9"/>
<dbReference type="UniPathway" id="UPA00193"/>
<dbReference type="UniPathway" id="UPA00288">
    <property type="reaction ID" value="UER01023"/>
</dbReference>
<dbReference type="GO" id="GO:0005829">
    <property type="term" value="C:cytosol"/>
    <property type="evidence" value="ECO:0007669"/>
    <property type="project" value="TreeGrafter"/>
</dbReference>
<dbReference type="GO" id="GO:0004372">
    <property type="term" value="F:glycine hydroxymethyltransferase activity"/>
    <property type="evidence" value="ECO:0007669"/>
    <property type="project" value="UniProtKB-UniRule"/>
</dbReference>
<dbReference type="GO" id="GO:0030170">
    <property type="term" value="F:pyridoxal phosphate binding"/>
    <property type="evidence" value="ECO:0007669"/>
    <property type="project" value="UniProtKB-UniRule"/>
</dbReference>
<dbReference type="GO" id="GO:0019264">
    <property type="term" value="P:glycine biosynthetic process from serine"/>
    <property type="evidence" value="ECO:0007669"/>
    <property type="project" value="UniProtKB-UniRule"/>
</dbReference>
<dbReference type="GO" id="GO:0035999">
    <property type="term" value="P:tetrahydrofolate interconversion"/>
    <property type="evidence" value="ECO:0007669"/>
    <property type="project" value="UniProtKB-UniRule"/>
</dbReference>
<dbReference type="CDD" id="cd00378">
    <property type="entry name" value="SHMT"/>
    <property type="match status" value="1"/>
</dbReference>
<dbReference type="FunFam" id="3.40.640.10:FF:000001">
    <property type="entry name" value="Serine hydroxymethyltransferase"/>
    <property type="match status" value="1"/>
</dbReference>
<dbReference type="FunFam" id="3.90.1150.10:FF:000003">
    <property type="entry name" value="Serine hydroxymethyltransferase"/>
    <property type="match status" value="1"/>
</dbReference>
<dbReference type="Gene3D" id="3.90.1150.10">
    <property type="entry name" value="Aspartate Aminotransferase, domain 1"/>
    <property type="match status" value="1"/>
</dbReference>
<dbReference type="Gene3D" id="3.40.640.10">
    <property type="entry name" value="Type I PLP-dependent aspartate aminotransferase-like (Major domain)"/>
    <property type="match status" value="1"/>
</dbReference>
<dbReference type="HAMAP" id="MF_00051">
    <property type="entry name" value="SHMT"/>
    <property type="match status" value="1"/>
</dbReference>
<dbReference type="InterPro" id="IPR015424">
    <property type="entry name" value="PyrdxlP-dep_Trfase"/>
</dbReference>
<dbReference type="InterPro" id="IPR015421">
    <property type="entry name" value="PyrdxlP-dep_Trfase_major"/>
</dbReference>
<dbReference type="InterPro" id="IPR015422">
    <property type="entry name" value="PyrdxlP-dep_Trfase_small"/>
</dbReference>
<dbReference type="InterPro" id="IPR001085">
    <property type="entry name" value="Ser_HO-MeTrfase"/>
</dbReference>
<dbReference type="InterPro" id="IPR049943">
    <property type="entry name" value="Ser_HO-MeTrfase-like"/>
</dbReference>
<dbReference type="InterPro" id="IPR019798">
    <property type="entry name" value="Ser_HO-MeTrfase_PLP_BS"/>
</dbReference>
<dbReference type="InterPro" id="IPR039429">
    <property type="entry name" value="SHMT-like_dom"/>
</dbReference>
<dbReference type="NCBIfam" id="NF000586">
    <property type="entry name" value="PRK00011.1"/>
    <property type="match status" value="1"/>
</dbReference>
<dbReference type="PANTHER" id="PTHR11680">
    <property type="entry name" value="SERINE HYDROXYMETHYLTRANSFERASE"/>
    <property type="match status" value="1"/>
</dbReference>
<dbReference type="PANTHER" id="PTHR11680:SF35">
    <property type="entry name" value="SERINE HYDROXYMETHYLTRANSFERASE 1"/>
    <property type="match status" value="1"/>
</dbReference>
<dbReference type="Pfam" id="PF00464">
    <property type="entry name" value="SHMT"/>
    <property type="match status" value="1"/>
</dbReference>
<dbReference type="PIRSF" id="PIRSF000412">
    <property type="entry name" value="SHMT"/>
    <property type="match status" value="1"/>
</dbReference>
<dbReference type="SUPFAM" id="SSF53383">
    <property type="entry name" value="PLP-dependent transferases"/>
    <property type="match status" value="1"/>
</dbReference>
<dbReference type="PROSITE" id="PS00096">
    <property type="entry name" value="SHMT"/>
    <property type="match status" value="1"/>
</dbReference>
<feature type="chain" id="PRO_0000113663" description="Serine hydroxymethyltransferase">
    <location>
        <begin position="1"/>
        <end position="412"/>
    </location>
</feature>
<feature type="binding site" evidence="1">
    <location>
        <position position="117"/>
    </location>
    <ligand>
        <name>(6S)-5,6,7,8-tetrahydrofolate</name>
        <dbReference type="ChEBI" id="CHEBI:57453"/>
    </ligand>
</feature>
<feature type="binding site" evidence="1">
    <location>
        <begin position="121"/>
        <end position="123"/>
    </location>
    <ligand>
        <name>(6S)-5,6,7,8-tetrahydrofolate</name>
        <dbReference type="ChEBI" id="CHEBI:57453"/>
    </ligand>
</feature>
<feature type="site" description="Plays an important role in substrate specificity" evidence="1">
    <location>
        <position position="225"/>
    </location>
</feature>
<feature type="modified residue" description="N6-(pyridoxal phosphate)lysine" evidence="1">
    <location>
        <position position="226"/>
    </location>
</feature>